<name>SCX3_CENHU</name>
<proteinExistence type="evidence at protein level"/>
<keyword id="KW-0903">Direct protein sequencing</keyword>
<keyword id="KW-1015">Disulfide bond</keyword>
<keyword id="KW-0872">Ion channel impairing toxin</keyword>
<keyword id="KW-0528">Neurotoxin</keyword>
<keyword id="KW-0964">Secreted</keyword>
<keyword id="KW-0800">Toxin</keyword>
<keyword id="KW-0738">Voltage-gated sodium channel impairing toxin</keyword>
<evidence type="ECO:0000250" key="1">
    <source>
        <dbReference type="UniProtKB" id="P45662"/>
    </source>
</evidence>
<evidence type="ECO:0000255" key="2">
    <source>
        <dbReference type="PROSITE-ProRule" id="PRU01210"/>
    </source>
</evidence>
<evidence type="ECO:0000269" key="3">
    <source ref="1"/>
</evidence>
<evidence type="ECO:0000303" key="4">
    <source ref="1"/>
</evidence>
<evidence type="ECO:0000305" key="5"/>
<evidence type="ECO:0000305" key="6">
    <source ref="1"/>
</evidence>
<reference key="1">
    <citation type="journal article" date="2022" name="Toxins">
        <title>Characterization of Four Medically Important Toxins from Centruroides huichol Scorpion Venom and Its Neutralization by a Single Recombinant Antibody Fragment.</title>
        <authorList>
            <person name="Valencia-Martinez H."/>
            <person name="Olamendi-Portugal T."/>
            <person name="Restano-Cassulini R."/>
            <person name="Serrano-Posada H."/>
            <person name="Zamudio F."/>
            <person name="Possani L.D."/>
            <person name="Riano-Umbarila L."/>
            <person name="Becerril B."/>
        </authorList>
    </citation>
    <scope>PROTEIN SEQUENCE</scope>
    <scope>FUNCTION</scope>
    <scope>SUBCELLULAR LOCATION</scope>
    <scope>TISSUE SPECIFICITY</scope>
    <scope>MASS SPECTROMETRY</scope>
    <scope>TOXIC DOSE</scope>
    <scope>NEUTRALIZATION BY ANTIBODY</scope>
    <scope>DISULFIDE BOND</scope>
</reference>
<dbReference type="SMR" id="C0HM16"/>
<dbReference type="GO" id="GO:0005576">
    <property type="term" value="C:extracellular region"/>
    <property type="evidence" value="ECO:0007669"/>
    <property type="project" value="UniProtKB-SubCell"/>
</dbReference>
<dbReference type="GO" id="GO:0019871">
    <property type="term" value="F:sodium channel inhibitor activity"/>
    <property type="evidence" value="ECO:0007669"/>
    <property type="project" value="InterPro"/>
</dbReference>
<dbReference type="GO" id="GO:0090729">
    <property type="term" value="F:toxin activity"/>
    <property type="evidence" value="ECO:0007669"/>
    <property type="project" value="UniProtKB-KW"/>
</dbReference>
<dbReference type="GO" id="GO:0006952">
    <property type="term" value="P:defense response"/>
    <property type="evidence" value="ECO:0007669"/>
    <property type="project" value="InterPro"/>
</dbReference>
<dbReference type="CDD" id="cd23106">
    <property type="entry name" value="neurotoxins_LC_scorpion"/>
    <property type="match status" value="1"/>
</dbReference>
<dbReference type="FunFam" id="3.30.30.10:FF:000002">
    <property type="entry name" value="Alpha-like toxin BmK-M1"/>
    <property type="match status" value="1"/>
</dbReference>
<dbReference type="Gene3D" id="3.30.30.10">
    <property type="entry name" value="Knottin, scorpion toxin-like"/>
    <property type="match status" value="1"/>
</dbReference>
<dbReference type="InterPro" id="IPR044062">
    <property type="entry name" value="LCN-type_CS_alpha_beta_dom"/>
</dbReference>
<dbReference type="InterPro" id="IPR003614">
    <property type="entry name" value="Scorpion_toxin-like"/>
</dbReference>
<dbReference type="InterPro" id="IPR036574">
    <property type="entry name" value="Scorpion_toxin-like_sf"/>
</dbReference>
<dbReference type="InterPro" id="IPR018218">
    <property type="entry name" value="Scorpion_toxinL"/>
</dbReference>
<dbReference type="InterPro" id="IPR002061">
    <property type="entry name" value="Scorpion_toxinL/defensin"/>
</dbReference>
<dbReference type="Pfam" id="PF00537">
    <property type="entry name" value="Toxin_3"/>
    <property type="match status" value="1"/>
</dbReference>
<dbReference type="PRINTS" id="PR00285">
    <property type="entry name" value="SCORPNTOXIN"/>
</dbReference>
<dbReference type="SMART" id="SM00505">
    <property type="entry name" value="Knot1"/>
    <property type="match status" value="1"/>
</dbReference>
<dbReference type="SUPFAM" id="SSF57095">
    <property type="entry name" value="Scorpion toxin-like"/>
    <property type="match status" value="1"/>
</dbReference>
<dbReference type="PROSITE" id="PS51863">
    <property type="entry name" value="LCN_CSAB"/>
    <property type="match status" value="1"/>
</dbReference>
<feature type="chain" id="PRO_0000456618" description="Beta-toxin Chui3" evidence="5">
    <location>
        <begin position="1" status="less than"/>
        <end position="66"/>
    </location>
</feature>
<feature type="domain" description="LCN-type CS-alpha/beta" evidence="2">
    <location>
        <begin position="1"/>
        <end position="66"/>
    </location>
</feature>
<feature type="disulfide bond" evidence="2 3">
    <location>
        <begin position="12"/>
        <end position="65"/>
    </location>
</feature>
<feature type="disulfide bond" evidence="2 3">
    <location>
        <begin position="16"/>
        <end position="41"/>
    </location>
</feature>
<feature type="disulfide bond" evidence="2 3">
    <location>
        <begin position="25"/>
        <end position="46"/>
    </location>
</feature>
<feature type="disulfide bond" evidence="2 3">
    <location>
        <begin position="29"/>
        <end position="48"/>
    </location>
</feature>
<feature type="non-terminal residue" evidence="5">
    <location>
        <position position="1"/>
    </location>
</feature>
<sequence>KEGYLVELGTGCKYECFKLGDNDYCLRECKARYGKGAGGYCYAFGCWCTQLYEQAVVWPLKNKTCR</sequence>
<comment type="function">
    <text evidence="1 3">Beta toxins bind voltage-independently at site-4 of sodium channels (Nav) and shift the voltage of activation toward more negative potentials thereby affecting sodium channel activation and promoting spontaneous and repetitive firing (By similarity). Acts on human sodium channel Nav1.6/SCN8A (Ref.1).</text>
</comment>
<comment type="subcellular location">
    <subcellularLocation>
        <location evidence="2 3">Secreted</location>
    </subcellularLocation>
</comment>
<comment type="tissue specificity">
    <text evidence="6">Expressed by the venom gland.</text>
</comment>
<comment type="domain">
    <text evidence="5">Has the structural arrangement of an alpha-helix connected to antiparallel beta-sheets by disulfide bonds (CS-alpha/beta).</text>
</comment>
<comment type="mass spectrometry"/>
<comment type="toxic dose">
    <text evidence="3">LD(50) is 85 ug/kg in mouse.</text>
</comment>
<comment type="miscellaneous">
    <text evidence="3">Is neutralized by the single-chain antibody variable fragment 10FG2.</text>
</comment>
<comment type="miscellaneous">
    <text evidence="3">Abundance in venom is approximately 1.8%.</text>
</comment>
<comment type="similarity">
    <text evidence="5">Belongs to the long (4 C-C) scorpion toxin superfamily. Sodium channel inhibitor family. Beta subfamily.</text>
</comment>
<protein>
    <recommendedName>
        <fullName evidence="5">Beta-toxin Chui3</fullName>
    </recommendedName>
    <alternativeName>
        <fullName evidence="4">Chui3</fullName>
    </alternativeName>
</protein>
<organism>
    <name type="scientific">Centruroides huichol</name>
    <name type="common">Scorpion</name>
    <dbReference type="NCBI Taxonomy" id="2911785"/>
    <lineage>
        <taxon>Eukaryota</taxon>
        <taxon>Metazoa</taxon>
        <taxon>Ecdysozoa</taxon>
        <taxon>Arthropoda</taxon>
        <taxon>Chelicerata</taxon>
        <taxon>Arachnida</taxon>
        <taxon>Scorpiones</taxon>
        <taxon>Buthida</taxon>
        <taxon>Buthoidea</taxon>
        <taxon>Buthidae</taxon>
        <taxon>Centruroides</taxon>
    </lineage>
</organism>
<accession>C0HM16</accession>